<protein>
    <recommendedName>
        <fullName evidence="1">Holliday junction branch migration complex subunit RuvA</fullName>
    </recommendedName>
</protein>
<sequence length="183" mass="20011">MIVAIEGIVSKKEPTFVVLKTSSGVSYGVYVSLFCSGNFEKDQKIELSITQIIKEDSHKLYGFLDTNEQRMFELLIKISGIGATTAMALCSSLDTNTFYTALQSGDESVFKKVPGIGPKSAKRIIAELSDAKINIENSNQDHAQALAALLSLGFKQENILKVLRTCESQNTSELIKEALKKLA</sequence>
<name>RUVA_CAMLR</name>
<proteinExistence type="inferred from homology"/>
<accession>B9KFX7</accession>
<feature type="chain" id="PRO_1000195125" description="Holliday junction branch migration complex subunit RuvA">
    <location>
        <begin position="1"/>
        <end position="183"/>
    </location>
</feature>
<feature type="region of interest" description="Domain I" evidence="1">
    <location>
        <begin position="1"/>
        <end position="64"/>
    </location>
</feature>
<feature type="region of interest" description="Domain II" evidence="1">
    <location>
        <begin position="65"/>
        <end position="138"/>
    </location>
</feature>
<feature type="region of interest" description="Domain III" evidence="1">
    <location>
        <begin position="138"/>
        <end position="183"/>
    </location>
</feature>
<feature type="region of interest" description="Flexible linker" evidence="1">
    <location>
        <position position="138"/>
    </location>
</feature>
<comment type="function">
    <text evidence="1">The RuvA-RuvB-RuvC complex processes Holliday junction (HJ) DNA during genetic recombination and DNA repair, while the RuvA-RuvB complex plays an important role in the rescue of blocked DNA replication forks via replication fork reversal (RFR). RuvA specifically binds to HJ cruciform DNA, conferring on it an open structure. The RuvB hexamer acts as an ATP-dependent pump, pulling dsDNA into and through the RuvAB complex. HJ branch migration allows RuvC to scan DNA until it finds its consensus sequence, where it cleaves and resolves the cruciform DNA.</text>
</comment>
<comment type="subunit">
    <text evidence="1">Homotetramer. Forms an RuvA(8)-RuvB(12)-Holliday junction (HJ) complex. HJ DNA is sandwiched between 2 RuvA tetramers; dsDNA enters through RuvA and exits via RuvB. An RuvB hexamer assembles on each DNA strand where it exits the tetramer. Each RuvB hexamer is contacted by two RuvA subunits (via domain III) on 2 adjacent RuvB subunits; this complex drives branch migration. In the full resolvosome a probable DNA-RuvA(4)-RuvB(12)-RuvC(2) complex forms which resolves the HJ.</text>
</comment>
<comment type="subcellular location">
    <subcellularLocation>
        <location evidence="1">Cytoplasm</location>
    </subcellularLocation>
</comment>
<comment type="domain">
    <text evidence="1">Has three domains with a flexible linker between the domains II and III and assumes an 'L' shape. Domain III is highly mobile and contacts RuvB.</text>
</comment>
<comment type="similarity">
    <text evidence="1">Belongs to the RuvA family.</text>
</comment>
<gene>
    <name evidence="1" type="primary">ruvA</name>
    <name type="ordered locus">Cla_0633</name>
</gene>
<reference key="1">
    <citation type="journal article" date="2008" name="Foodborne Pathog. Dis.">
        <title>The complete genome sequence and analysis of the human pathogen Campylobacter lari.</title>
        <authorList>
            <person name="Miller W.G."/>
            <person name="Wang G."/>
            <person name="Binnewies T.T."/>
            <person name="Parker C.T."/>
        </authorList>
    </citation>
    <scope>NUCLEOTIDE SEQUENCE [LARGE SCALE GENOMIC DNA]</scope>
    <source>
        <strain>RM2100 / D67 / ATCC BAA-1060</strain>
    </source>
</reference>
<organism>
    <name type="scientific">Campylobacter lari (strain RM2100 / D67 / ATCC BAA-1060)</name>
    <dbReference type="NCBI Taxonomy" id="306263"/>
    <lineage>
        <taxon>Bacteria</taxon>
        <taxon>Pseudomonadati</taxon>
        <taxon>Campylobacterota</taxon>
        <taxon>Epsilonproteobacteria</taxon>
        <taxon>Campylobacterales</taxon>
        <taxon>Campylobacteraceae</taxon>
        <taxon>Campylobacter</taxon>
    </lineage>
</organism>
<dbReference type="EMBL" id="CP000932">
    <property type="protein sequence ID" value="ACM63962.1"/>
    <property type="molecule type" value="Genomic_DNA"/>
</dbReference>
<dbReference type="RefSeq" id="WP_012661345.1">
    <property type="nucleotide sequence ID" value="NC_012039.1"/>
</dbReference>
<dbReference type="SMR" id="B9KFX7"/>
<dbReference type="STRING" id="306263.Cla_0633"/>
<dbReference type="KEGG" id="cla:CLA_0633"/>
<dbReference type="PATRIC" id="fig|306263.5.peg.613"/>
<dbReference type="eggNOG" id="COG0632">
    <property type="taxonomic scope" value="Bacteria"/>
</dbReference>
<dbReference type="HOGENOM" id="CLU_087936_3_1_7"/>
<dbReference type="Proteomes" id="UP000007727">
    <property type="component" value="Chromosome"/>
</dbReference>
<dbReference type="GO" id="GO:0005737">
    <property type="term" value="C:cytoplasm"/>
    <property type="evidence" value="ECO:0007669"/>
    <property type="project" value="UniProtKB-SubCell"/>
</dbReference>
<dbReference type="GO" id="GO:0009379">
    <property type="term" value="C:Holliday junction helicase complex"/>
    <property type="evidence" value="ECO:0007669"/>
    <property type="project" value="InterPro"/>
</dbReference>
<dbReference type="GO" id="GO:0048476">
    <property type="term" value="C:Holliday junction resolvase complex"/>
    <property type="evidence" value="ECO:0007669"/>
    <property type="project" value="UniProtKB-UniRule"/>
</dbReference>
<dbReference type="GO" id="GO:0005524">
    <property type="term" value="F:ATP binding"/>
    <property type="evidence" value="ECO:0007669"/>
    <property type="project" value="InterPro"/>
</dbReference>
<dbReference type="GO" id="GO:0000400">
    <property type="term" value="F:four-way junction DNA binding"/>
    <property type="evidence" value="ECO:0007669"/>
    <property type="project" value="UniProtKB-UniRule"/>
</dbReference>
<dbReference type="GO" id="GO:0009378">
    <property type="term" value="F:four-way junction helicase activity"/>
    <property type="evidence" value="ECO:0007669"/>
    <property type="project" value="InterPro"/>
</dbReference>
<dbReference type="GO" id="GO:0006310">
    <property type="term" value="P:DNA recombination"/>
    <property type="evidence" value="ECO:0007669"/>
    <property type="project" value="UniProtKB-UniRule"/>
</dbReference>
<dbReference type="GO" id="GO:0006281">
    <property type="term" value="P:DNA repair"/>
    <property type="evidence" value="ECO:0007669"/>
    <property type="project" value="UniProtKB-UniRule"/>
</dbReference>
<dbReference type="Gene3D" id="1.10.150.20">
    <property type="entry name" value="5' to 3' exonuclease, C-terminal subdomain"/>
    <property type="match status" value="1"/>
</dbReference>
<dbReference type="Gene3D" id="1.10.8.10">
    <property type="entry name" value="DNA helicase RuvA subunit, C-terminal domain"/>
    <property type="match status" value="1"/>
</dbReference>
<dbReference type="Gene3D" id="2.40.50.140">
    <property type="entry name" value="Nucleic acid-binding proteins"/>
    <property type="match status" value="1"/>
</dbReference>
<dbReference type="HAMAP" id="MF_00031">
    <property type="entry name" value="DNA_HJ_migration_RuvA"/>
    <property type="match status" value="1"/>
</dbReference>
<dbReference type="InterPro" id="IPR013849">
    <property type="entry name" value="DNA_helicase_Holl-junc_RuvA_I"/>
</dbReference>
<dbReference type="InterPro" id="IPR003583">
    <property type="entry name" value="Hlx-hairpin-Hlx_DNA-bd_motif"/>
</dbReference>
<dbReference type="InterPro" id="IPR012340">
    <property type="entry name" value="NA-bd_OB-fold"/>
</dbReference>
<dbReference type="InterPro" id="IPR000085">
    <property type="entry name" value="RuvA"/>
</dbReference>
<dbReference type="InterPro" id="IPR010994">
    <property type="entry name" value="RuvA_2-like"/>
</dbReference>
<dbReference type="InterPro" id="IPR011114">
    <property type="entry name" value="RuvA_C"/>
</dbReference>
<dbReference type="InterPro" id="IPR036267">
    <property type="entry name" value="RuvA_C_sf"/>
</dbReference>
<dbReference type="NCBIfam" id="TIGR00084">
    <property type="entry name" value="ruvA"/>
    <property type="match status" value="1"/>
</dbReference>
<dbReference type="Pfam" id="PF14520">
    <property type="entry name" value="HHH_5"/>
    <property type="match status" value="1"/>
</dbReference>
<dbReference type="Pfam" id="PF07499">
    <property type="entry name" value="RuvA_C"/>
    <property type="match status" value="1"/>
</dbReference>
<dbReference type="Pfam" id="PF01330">
    <property type="entry name" value="RuvA_N"/>
    <property type="match status" value="1"/>
</dbReference>
<dbReference type="SMART" id="SM00278">
    <property type="entry name" value="HhH1"/>
    <property type="match status" value="2"/>
</dbReference>
<dbReference type="SUPFAM" id="SSF46929">
    <property type="entry name" value="DNA helicase RuvA subunit, C-terminal domain"/>
    <property type="match status" value="1"/>
</dbReference>
<dbReference type="SUPFAM" id="SSF50249">
    <property type="entry name" value="Nucleic acid-binding proteins"/>
    <property type="match status" value="1"/>
</dbReference>
<dbReference type="SUPFAM" id="SSF47781">
    <property type="entry name" value="RuvA domain 2-like"/>
    <property type="match status" value="1"/>
</dbReference>
<keyword id="KW-0963">Cytoplasm</keyword>
<keyword id="KW-0227">DNA damage</keyword>
<keyword id="KW-0233">DNA recombination</keyword>
<keyword id="KW-0234">DNA repair</keyword>
<keyword id="KW-0238">DNA-binding</keyword>
<keyword id="KW-1185">Reference proteome</keyword>
<evidence type="ECO:0000255" key="1">
    <source>
        <dbReference type="HAMAP-Rule" id="MF_00031"/>
    </source>
</evidence>